<keyword id="KW-0539">Nucleus</keyword>
<keyword id="KW-1185">Reference proteome</keyword>
<keyword id="KW-0687">Ribonucleoprotein</keyword>
<keyword id="KW-0690">Ribosome biogenesis</keyword>
<keyword id="KW-0698">rRNA processing</keyword>
<dbReference type="EMBL" id="BC087066">
    <property type="protein sequence ID" value="AAH87066.1"/>
    <property type="molecule type" value="mRNA"/>
</dbReference>
<dbReference type="RefSeq" id="NP_001009700.1">
    <property type="nucleotide sequence ID" value="NM_001009700.1"/>
</dbReference>
<dbReference type="SMR" id="Q5PQR5"/>
<dbReference type="FunCoup" id="Q5PQR5">
    <property type="interactions" value="3283"/>
</dbReference>
<dbReference type="STRING" id="10116.ENSRNOP00000062237"/>
<dbReference type="iPTMnet" id="Q5PQR5"/>
<dbReference type="PhosphoSitePlus" id="Q5PQR5"/>
<dbReference type="PaxDb" id="10116-ENSRNOP00000062237"/>
<dbReference type="Ensembl" id="ENSRNOT00000066913.3">
    <property type="protein sequence ID" value="ENSRNOP00000062237.1"/>
    <property type="gene ID" value="ENSRNOG00000013285.8"/>
</dbReference>
<dbReference type="GeneID" id="316317"/>
<dbReference type="KEGG" id="rno:316317"/>
<dbReference type="UCSC" id="RGD:1308463">
    <property type="organism name" value="rat"/>
</dbReference>
<dbReference type="AGR" id="RGD:1308463"/>
<dbReference type="CTD" id="92856"/>
<dbReference type="RGD" id="1308463">
    <property type="gene designation" value="Imp4"/>
</dbReference>
<dbReference type="eggNOG" id="KOG2781">
    <property type="taxonomic scope" value="Eukaryota"/>
</dbReference>
<dbReference type="GeneTree" id="ENSGT00940000153231"/>
<dbReference type="HOGENOM" id="CLU_040063_2_0_1"/>
<dbReference type="InParanoid" id="Q5PQR5"/>
<dbReference type="OMA" id="IGTMSEQ"/>
<dbReference type="OrthoDB" id="10253204at2759"/>
<dbReference type="PhylomeDB" id="Q5PQR5"/>
<dbReference type="Reactome" id="R-RNO-6791226">
    <property type="pathway name" value="Major pathway of rRNA processing in the nucleolus and cytosol"/>
</dbReference>
<dbReference type="PRO" id="PR:Q5PQR5"/>
<dbReference type="Proteomes" id="UP000002494">
    <property type="component" value="Chromosome 9"/>
</dbReference>
<dbReference type="Bgee" id="ENSRNOG00000013285">
    <property type="expression patterns" value="Expressed in heart and 20 other cell types or tissues"/>
</dbReference>
<dbReference type="GO" id="GO:0034457">
    <property type="term" value="C:Mpp10 complex"/>
    <property type="evidence" value="ECO:0000266"/>
    <property type="project" value="RGD"/>
</dbReference>
<dbReference type="GO" id="GO:0005730">
    <property type="term" value="C:nucleolus"/>
    <property type="evidence" value="ECO:0000318"/>
    <property type="project" value="GO_Central"/>
</dbReference>
<dbReference type="GO" id="GO:0030684">
    <property type="term" value="C:preribosome"/>
    <property type="evidence" value="ECO:0000266"/>
    <property type="project" value="RGD"/>
</dbReference>
<dbReference type="GO" id="GO:0032040">
    <property type="term" value="C:small-subunit processome"/>
    <property type="evidence" value="ECO:0000250"/>
    <property type="project" value="UniProtKB"/>
</dbReference>
<dbReference type="GO" id="GO:0042134">
    <property type="term" value="F:rRNA primary transcript binding"/>
    <property type="evidence" value="ECO:0007669"/>
    <property type="project" value="InterPro"/>
</dbReference>
<dbReference type="GO" id="GO:0030515">
    <property type="term" value="F:snoRNA binding"/>
    <property type="evidence" value="ECO:0000318"/>
    <property type="project" value="GO_Central"/>
</dbReference>
<dbReference type="GO" id="GO:0042274">
    <property type="term" value="P:ribosomal small subunit biogenesis"/>
    <property type="evidence" value="ECO:0000250"/>
    <property type="project" value="UniProtKB"/>
</dbReference>
<dbReference type="GO" id="GO:0006364">
    <property type="term" value="P:rRNA processing"/>
    <property type="evidence" value="ECO:0000318"/>
    <property type="project" value="GO_Central"/>
</dbReference>
<dbReference type="FunFam" id="3.40.50.10480:FF:000001">
    <property type="entry name" value="IMP4, U3 small nucleolar ribonucleoprotein"/>
    <property type="match status" value="1"/>
</dbReference>
<dbReference type="Gene3D" id="3.40.50.10480">
    <property type="entry name" value="Probable brix-domain ribosomal biogenesis protein"/>
    <property type="match status" value="1"/>
</dbReference>
<dbReference type="InterPro" id="IPR007109">
    <property type="entry name" value="Brix"/>
</dbReference>
<dbReference type="InterPro" id="IPR044281">
    <property type="entry name" value="IMP4/RPF1"/>
</dbReference>
<dbReference type="PANTHER" id="PTHR22734">
    <property type="entry name" value="U3 SMALL NUCLEOLAR RIBONUCLEOPROTEIN PROTEIN IMP4"/>
    <property type="match status" value="1"/>
</dbReference>
<dbReference type="PANTHER" id="PTHR22734:SF2">
    <property type="entry name" value="U3 SMALL NUCLEOLAR RIBONUCLEOPROTEIN PROTEIN IMP4"/>
    <property type="match status" value="1"/>
</dbReference>
<dbReference type="Pfam" id="PF04427">
    <property type="entry name" value="Brix"/>
    <property type="match status" value="1"/>
</dbReference>
<dbReference type="SMART" id="SM00879">
    <property type="entry name" value="Brix"/>
    <property type="match status" value="1"/>
</dbReference>
<dbReference type="SUPFAM" id="SSF52954">
    <property type="entry name" value="Class II aaRS ABD-related"/>
    <property type="match status" value="1"/>
</dbReference>
<dbReference type="PROSITE" id="PS50833">
    <property type="entry name" value="BRIX"/>
    <property type="match status" value="1"/>
</dbReference>
<gene>
    <name type="primary">Imp4</name>
</gene>
<organism>
    <name type="scientific">Rattus norvegicus</name>
    <name type="common">Rat</name>
    <dbReference type="NCBI Taxonomy" id="10116"/>
    <lineage>
        <taxon>Eukaryota</taxon>
        <taxon>Metazoa</taxon>
        <taxon>Chordata</taxon>
        <taxon>Craniata</taxon>
        <taxon>Vertebrata</taxon>
        <taxon>Euteleostomi</taxon>
        <taxon>Mammalia</taxon>
        <taxon>Eutheria</taxon>
        <taxon>Euarchontoglires</taxon>
        <taxon>Glires</taxon>
        <taxon>Rodentia</taxon>
        <taxon>Myomorpha</taxon>
        <taxon>Muroidea</taxon>
        <taxon>Muridae</taxon>
        <taxon>Murinae</taxon>
        <taxon>Rattus</taxon>
    </lineage>
</organism>
<proteinExistence type="evidence at transcript level"/>
<sequence>MLRREARLRREYLYRKAREEAQRSVQEKKERVKRALEENQLIPTELRREALALQGSLEFDDAGGEGVTSHVDDEYRWAGVEDPKVMITTSRDPSSRLKMFAKELKLVFPGAQRMNRGRHEVGALVRACKANGVTDLLVVHEHRGTPVGLIVSHLPFGPTAYFTLCNVVMRHDIPDLGTMSEAKPHLITHGFSSRLGKRVSDILRYLFPVPKDDSHRVITFANQDDYISFRHHVYKKTDHRNVELTEVGPRFELKLYMIRLGTLEQEATADVEWRWHPYTNTARKRVFLSAE</sequence>
<evidence type="ECO:0000250" key="1">
    <source>
        <dbReference type="UniProtKB" id="Q96G21"/>
    </source>
</evidence>
<evidence type="ECO:0000255" key="2">
    <source>
        <dbReference type="PROSITE-ProRule" id="PRU00034"/>
    </source>
</evidence>
<feature type="chain" id="PRO_0000120239" description="U3 small nucleolar ribonucleoprotein protein IMP4">
    <location>
        <begin position="1"/>
        <end position="291"/>
    </location>
</feature>
<feature type="domain" description="Brix" evidence="2">
    <location>
        <begin position="83"/>
        <end position="264"/>
    </location>
</feature>
<reference key="1">
    <citation type="journal article" date="2004" name="Genome Res.">
        <title>The status, quality, and expansion of the NIH full-length cDNA project: the Mammalian Gene Collection (MGC).</title>
        <authorList>
            <consortium name="The MGC Project Team"/>
        </authorList>
    </citation>
    <scope>NUCLEOTIDE SEQUENCE [LARGE SCALE MRNA]</scope>
    <source>
        <tissue>Testis</tissue>
    </source>
</reference>
<name>IMP4_RAT</name>
<protein>
    <recommendedName>
        <fullName>U3 small nucleolar ribonucleoprotein protein IMP4</fullName>
        <shortName>U3 snoRNP protein IMP4</shortName>
    </recommendedName>
</protein>
<comment type="function">
    <text evidence="1">Component of the 60-80S U3 small nucleolar ribonucleoprotein (U3 snoRNP). Required for the early cleavages during pre-18S ribosomal RNA processing. Part of the small subunit (SSU) processome, first precursor of the small eukaryotic ribosomal subunit. During the assembly of the SSU processome in the nucleolus, many ribosome biogenesis factors, an RNA chaperone and ribosomal proteins associate with the nascent pre-rRNA and work in concert to generate RNA folding, modifications, rearrangements and cleavage as well as targeted degradation of pre-ribosomal RNA by the RNA exosome.</text>
</comment>
<comment type="subunit">
    <text evidence="1">Part of the small subunit (SSU) processome, composed of more than 70 proteins and the RNA chaperone small nucleolar RNA (snoRNA) U3. Component of a heterotrimeric complex containing IMP3, IMP4 and MPHOSPH10. Interacts with MPHOSPH10.</text>
</comment>
<comment type="subcellular location">
    <subcellularLocation>
        <location evidence="1">Nucleus</location>
        <location evidence="1">Nucleolus</location>
    </subcellularLocation>
</comment>
<accession>Q5PQR5</accession>